<dbReference type="EC" id="3.6.5.2" evidence="1"/>
<dbReference type="EMBL" id="DQ983377">
    <property type="protein sequence ID" value="ABI97979.1"/>
    <property type="molecule type" value="mRNA"/>
</dbReference>
<dbReference type="EMBL" id="BC044471">
    <property type="protein sequence ID" value="AAH44471.1"/>
    <property type="molecule type" value="mRNA"/>
</dbReference>
<dbReference type="EMBL" id="BC065446">
    <property type="protein sequence ID" value="AAH65446.1"/>
    <property type="molecule type" value="mRNA"/>
</dbReference>
<dbReference type="EMBL" id="BK001704">
    <property type="protein sequence ID" value="DAA02246.1"/>
    <property type="molecule type" value="mRNA"/>
</dbReference>
<dbReference type="RefSeq" id="NP_956434.1">
    <property type="nucleotide sequence ID" value="NM_200140.1"/>
</dbReference>
<dbReference type="SMR" id="Q6P0U3"/>
<dbReference type="FunCoup" id="Q6P0U3">
    <property type="interactions" value="276"/>
</dbReference>
<dbReference type="STRING" id="7955.ENSDARP00000003188"/>
<dbReference type="PaxDb" id="7955-ENSDARP00000003188"/>
<dbReference type="Ensembl" id="ENSDART00000015755">
    <property type="protein sequence ID" value="ENSDARP00000003188"/>
    <property type="gene ID" value="ENSDARG00000015611"/>
</dbReference>
<dbReference type="GeneID" id="393109"/>
<dbReference type="KEGG" id="dre:393109"/>
<dbReference type="AGR" id="ZFIN:ZDB-GENE-040426-793"/>
<dbReference type="CTD" id="65997"/>
<dbReference type="ZFIN" id="ZDB-GENE-040426-793">
    <property type="gene designation" value="rasl11b"/>
</dbReference>
<dbReference type="eggNOG" id="KOG0395">
    <property type="taxonomic scope" value="Eukaryota"/>
</dbReference>
<dbReference type="HOGENOM" id="CLU_041217_9_7_1"/>
<dbReference type="InParanoid" id="Q6P0U3"/>
<dbReference type="OMA" id="KEVEPQH"/>
<dbReference type="OrthoDB" id="18798at2759"/>
<dbReference type="PhylomeDB" id="Q6P0U3"/>
<dbReference type="TreeFam" id="TF318030"/>
<dbReference type="PRO" id="PR:Q6P0U3"/>
<dbReference type="Proteomes" id="UP000000437">
    <property type="component" value="Chromosome 20"/>
</dbReference>
<dbReference type="Bgee" id="ENSDARG00000015611">
    <property type="expression patterns" value="Expressed in axis (Danio) and 48 other cell types or tissues"/>
</dbReference>
<dbReference type="GO" id="GO:0003925">
    <property type="term" value="F:G protein activity"/>
    <property type="evidence" value="ECO:0007669"/>
    <property type="project" value="UniProtKB-EC"/>
</dbReference>
<dbReference type="GO" id="GO:0005525">
    <property type="term" value="F:GTP binding"/>
    <property type="evidence" value="ECO:0007669"/>
    <property type="project" value="UniProtKB-KW"/>
</dbReference>
<dbReference type="GO" id="GO:0048382">
    <property type="term" value="P:mesendoderm development"/>
    <property type="evidence" value="ECO:0000316"/>
    <property type="project" value="ZFIN"/>
</dbReference>
<dbReference type="CDD" id="cd04146">
    <property type="entry name" value="RERG_RasL11_like"/>
    <property type="match status" value="1"/>
</dbReference>
<dbReference type="Gene3D" id="3.40.50.300">
    <property type="entry name" value="P-loop containing nucleotide triphosphate hydrolases"/>
    <property type="match status" value="1"/>
</dbReference>
<dbReference type="InterPro" id="IPR027417">
    <property type="entry name" value="P-loop_NTPase"/>
</dbReference>
<dbReference type="InterPro" id="IPR051065">
    <property type="entry name" value="Ras-related_GTPase"/>
</dbReference>
<dbReference type="InterPro" id="IPR005225">
    <property type="entry name" value="Small_GTP-bd"/>
</dbReference>
<dbReference type="InterPro" id="IPR001806">
    <property type="entry name" value="Small_GTPase"/>
</dbReference>
<dbReference type="NCBIfam" id="TIGR00231">
    <property type="entry name" value="small_GTP"/>
    <property type="match status" value="1"/>
</dbReference>
<dbReference type="PANTHER" id="PTHR45704">
    <property type="entry name" value="RAS-LIKE FAMILY MEMBER 11"/>
    <property type="match status" value="1"/>
</dbReference>
<dbReference type="Pfam" id="PF00071">
    <property type="entry name" value="Ras"/>
    <property type="match status" value="1"/>
</dbReference>
<dbReference type="PRINTS" id="PR00449">
    <property type="entry name" value="RASTRNSFRMNG"/>
</dbReference>
<dbReference type="SMART" id="SM00175">
    <property type="entry name" value="RAB"/>
    <property type="match status" value="1"/>
</dbReference>
<dbReference type="SMART" id="SM00173">
    <property type="entry name" value="RAS"/>
    <property type="match status" value="1"/>
</dbReference>
<dbReference type="SMART" id="SM00174">
    <property type="entry name" value="RHO"/>
    <property type="match status" value="1"/>
</dbReference>
<dbReference type="SUPFAM" id="SSF52540">
    <property type="entry name" value="P-loop containing nucleoside triphosphate hydrolases"/>
    <property type="match status" value="1"/>
</dbReference>
<dbReference type="PROSITE" id="PS51421">
    <property type="entry name" value="RAS"/>
    <property type="match status" value="1"/>
</dbReference>
<sequence>MRLIQNMSTIAEYPSADCPSSRVIKIAVIGGSGVGKTALVVRFLTKRFIGDYERNVGNLYSREVQIDGEQVAIQVQDTPGVQVNANGLSCTDHVSRSIQWADAVVMVYSVTDRKSFDLIGQLHQLVTRTHSDRSIPIILVANKADLLHVRRVDAQEGPVLSSALSCSFYEVSASEDYNQVHSAFHRLCVDLAKLQPQTPINATSSVTEKKRSPLIPRPKSPNMQDLKRRFKQVLSAKVRTVTSV</sequence>
<comment type="catalytic activity">
    <reaction evidence="1">
        <text>GTP + H2O = GDP + phosphate + H(+)</text>
        <dbReference type="Rhea" id="RHEA:19669"/>
        <dbReference type="ChEBI" id="CHEBI:15377"/>
        <dbReference type="ChEBI" id="CHEBI:15378"/>
        <dbReference type="ChEBI" id="CHEBI:37565"/>
        <dbReference type="ChEBI" id="CHEBI:43474"/>
        <dbReference type="ChEBI" id="CHEBI:58189"/>
        <dbReference type="EC" id="3.6.5.2"/>
    </reaction>
</comment>
<comment type="similarity">
    <text evidence="3">Belongs to the small GTPase superfamily. Ras family.</text>
</comment>
<keyword id="KW-0342">GTP-binding</keyword>
<keyword id="KW-0378">Hydrolase</keyword>
<keyword id="KW-0547">Nucleotide-binding</keyword>
<keyword id="KW-1185">Reference proteome</keyword>
<protein>
    <recommendedName>
        <fullName>Ras-like protein family member 11B</fullName>
        <ecNumber evidence="1">3.6.5.2</ecNumber>
    </recommendedName>
</protein>
<feature type="chain" id="PRO_0000308368" description="Ras-like protein family member 11B">
    <location>
        <begin position="1"/>
        <end position="244"/>
    </location>
</feature>
<feature type="region of interest" description="Small GTPase-like">
    <location>
        <begin position="19"/>
        <end position="242"/>
    </location>
</feature>
<feature type="region of interest" description="Disordered" evidence="4">
    <location>
        <begin position="200"/>
        <end position="222"/>
    </location>
</feature>
<feature type="binding site" evidence="2">
    <location>
        <begin position="30"/>
        <end position="37"/>
    </location>
    <ligand>
        <name>GTP</name>
        <dbReference type="ChEBI" id="CHEBI:37565"/>
    </ligand>
</feature>
<feature type="binding site" evidence="2">
    <location>
        <begin position="77"/>
        <end position="81"/>
    </location>
    <ligand>
        <name>GTP</name>
        <dbReference type="ChEBI" id="CHEBI:37565"/>
    </ligand>
</feature>
<feature type="binding site" evidence="2">
    <location>
        <begin position="142"/>
        <end position="145"/>
    </location>
    <ligand>
        <name>GTP</name>
        <dbReference type="ChEBI" id="CHEBI:37565"/>
    </ligand>
</feature>
<feature type="sequence conflict" description="In Ref. 1; ABI97979." evidence="5" ref="1">
    <original>T</original>
    <variation>A</variation>
    <location>
        <position position="203"/>
    </location>
</feature>
<feature type="sequence conflict" description="In Ref. 2; AAH44471." evidence="5" ref="2">
    <original>N</original>
    <variation>D</variation>
    <location>
        <position position="222"/>
    </location>
</feature>
<proteinExistence type="evidence at transcript level"/>
<evidence type="ECO:0000250" key="1">
    <source>
        <dbReference type="UniProtKB" id="P01116"/>
    </source>
</evidence>
<evidence type="ECO:0000250" key="2">
    <source>
        <dbReference type="UniProtKB" id="Q96A58"/>
    </source>
</evidence>
<evidence type="ECO:0000255" key="3"/>
<evidence type="ECO:0000256" key="4">
    <source>
        <dbReference type="SAM" id="MobiDB-lite"/>
    </source>
</evidence>
<evidence type="ECO:0000305" key="5"/>
<evidence type="ECO:0000312" key="6">
    <source>
        <dbReference type="EMBL" id="AAH44471.1"/>
    </source>
</evidence>
<evidence type="ECO:0000312" key="7">
    <source>
        <dbReference type="EMBL" id="ABI97979.1"/>
    </source>
</evidence>
<evidence type="ECO:0000312" key="8">
    <source>
        <dbReference type="EMBL" id="DAA02246.1"/>
    </source>
</evidence>
<evidence type="ECO:0000312" key="9">
    <source>
        <dbReference type="ZFIN" id="ZDB-GENE-040426-793"/>
    </source>
</evidence>
<accession>Q6P0U3</accession>
<accession>Q001T7</accession>
<accession>Q803I5</accession>
<reference evidence="7" key="1">
    <citation type="submission" date="2006-09" db="EMBL/GenBank/DDBJ databases">
        <authorList>
            <person name="Pezeron G."/>
            <person name="Lambert G."/>
            <person name="Dickmeis T."/>
            <person name="Strahle U."/>
            <person name="Rosa F."/>
            <person name="Mourrain P."/>
        </authorList>
    </citation>
    <scope>NUCLEOTIDE SEQUENCE [MRNA]</scope>
</reference>
<reference evidence="7" key="2">
    <citation type="submission" date="2003-01" db="EMBL/GenBank/DDBJ databases">
        <authorList>
            <consortium name="NIH - Zebrafish Gene Collection (ZGC) project"/>
        </authorList>
    </citation>
    <scope>NUCLEOTIDE SEQUENCE [LARGE SCALE MRNA]</scope>
    <source>
        <strain evidence="6">AB</strain>
    </source>
</reference>
<reference evidence="5 8" key="3">
    <citation type="journal article" date="2004" name="Biochem. Biophys. Res. Commun.">
        <title>Rasl11a, member of a novel small monomeric GTPase gene family, is differentially expressed in prostate tumors.</title>
        <authorList>
            <person name="Louro R."/>
            <person name="Nakaya H.I."/>
            <person name="Paquola A.C.M."/>
            <person name="Martins E.A.L."/>
            <person name="da Silva A.M."/>
            <person name="Verjovski-Almeida S."/>
            <person name="Reis E.M."/>
        </authorList>
    </citation>
    <scope>IDENTIFICATION</scope>
</reference>
<name>RSLBB_DANRE</name>
<organism>
    <name type="scientific">Danio rerio</name>
    <name type="common">Zebrafish</name>
    <name type="synonym">Brachydanio rerio</name>
    <dbReference type="NCBI Taxonomy" id="7955"/>
    <lineage>
        <taxon>Eukaryota</taxon>
        <taxon>Metazoa</taxon>
        <taxon>Chordata</taxon>
        <taxon>Craniata</taxon>
        <taxon>Vertebrata</taxon>
        <taxon>Euteleostomi</taxon>
        <taxon>Actinopterygii</taxon>
        <taxon>Neopterygii</taxon>
        <taxon>Teleostei</taxon>
        <taxon>Ostariophysi</taxon>
        <taxon>Cypriniformes</taxon>
        <taxon>Danionidae</taxon>
        <taxon>Danioninae</taxon>
        <taxon>Danio</taxon>
    </lineage>
</organism>
<gene>
    <name evidence="9" type="primary">rasl11b</name>
</gene>